<name>VM36A_BOTIN</name>
<reference key="1">
    <citation type="journal article" date="2002" name="Gene">
        <title>A survey of gene expression and diversity in the venom glands of the pitviper snake Bothrops insularis through the generation of expressed sequence tags (ESTs).</title>
        <authorList>
            <person name="Junqueira-de-Azevedo I.L.M."/>
            <person name="Ho P.L."/>
        </authorList>
    </citation>
    <scope>NUCLEOTIDE SEQUENCE [MRNA]</scope>
    <source>
        <tissue>Venom gland</tissue>
    </source>
</reference>
<accession>Q8QG88</accession>
<keyword id="KW-0106">Calcium</keyword>
<keyword id="KW-1015">Disulfide bond</keyword>
<keyword id="KW-0325">Glycoprotein</keyword>
<keyword id="KW-1199">Hemostasis impairing toxin</keyword>
<keyword id="KW-0378">Hydrolase</keyword>
<keyword id="KW-0479">Metal-binding</keyword>
<keyword id="KW-0482">Metalloprotease</keyword>
<keyword id="KW-0645">Protease</keyword>
<keyword id="KW-0964">Secreted</keyword>
<keyword id="KW-0732">Signal</keyword>
<keyword id="KW-0800">Toxin</keyword>
<keyword id="KW-0862">Zinc</keyword>
<organism>
    <name type="scientific">Bothrops insularis</name>
    <name type="common">Golden lancehead</name>
    <name type="synonym">Lachesis insularis</name>
    <dbReference type="NCBI Taxonomy" id="8723"/>
    <lineage>
        <taxon>Eukaryota</taxon>
        <taxon>Metazoa</taxon>
        <taxon>Chordata</taxon>
        <taxon>Craniata</taxon>
        <taxon>Vertebrata</taxon>
        <taxon>Euteleostomi</taxon>
        <taxon>Lepidosauria</taxon>
        <taxon>Squamata</taxon>
        <taxon>Bifurcata</taxon>
        <taxon>Unidentata</taxon>
        <taxon>Episquamata</taxon>
        <taxon>Toxicofera</taxon>
        <taxon>Serpentes</taxon>
        <taxon>Colubroidea</taxon>
        <taxon>Viperidae</taxon>
        <taxon>Crotalinae</taxon>
        <taxon>Bothrops</taxon>
    </lineage>
</organism>
<feature type="signal peptide" evidence="2">
    <location>
        <begin position="1"/>
        <end position="20"/>
    </location>
</feature>
<feature type="propeptide" id="PRO_0000330005" evidence="1">
    <location>
        <begin position="21"/>
        <end position="189"/>
    </location>
</feature>
<feature type="chain" id="PRO_0000330006" description="Zinc metalloproteinase-disintegrin-like BITM06A">
    <location>
        <begin position="190"/>
        <end position="610"/>
    </location>
</feature>
<feature type="domain" description="Peptidase M12B" evidence="4">
    <location>
        <begin position="198"/>
        <end position="394"/>
    </location>
</feature>
<feature type="domain" description="Disintegrin" evidence="3">
    <location>
        <begin position="402"/>
        <end position="488"/>
    </location>
</feature>
<feature type="short sequence motif" description="D/ECD-tripeptide">
    <location>
        <begin position="466"/>
        <end position="468"/>
    </location>
</feature>
<feature type="active site" evidence="4 5">
    <location>
        <position position="335"/>
    </location>
</feature>
<feature type="binding site" evidence="1">
    <location>
        <position position="201"/>
    </location>
    <ligand>
        <name>Ca(2+)</name>
        <dbReference type="ChEBI" id="CHEBI:29108"/>
        <label>1</label>
    </ligand>
</feature>
<feature type="binding site" evidence="1">
    <location>
        <position position="285"/>
    </location>
    <ligand>
        <name>Ca(2+)</name>
        <dbReference type="ChEBI" id="CHEBI:29108"/>
        <label>1</label>
    </ligand>
</feature>
<feature type="binding site" evidence="1">
    <location>
        <position position="334"/>
    </location>
    <ligand>
        <name>Zn(2+)</name>
        <dbReference type="ChEBI" id="CHEBI:29105"/>
        <note>catalytic</note>
    </ligand>
</feature>
<feature type="binding site" evidence="1">
    <location>
        <position position="338"/>
    </location>
    <ligand>
        <name>Zn(2+)</name>
        <dbReference type="ChEBI" id="CHEBI:29105"/>
        <note>catalytic</note>
    </ligand>
</feature>
<feature type="binding site" evidence="1">
    <location>
        <position position="344"/>
    </location>
    <ligand>
        <name>Zn(2+)</name>
        <dbReference type="ChEBI" id="CHEBI:29105"/>
        <note>catalytic</note>
    </ligand>
</feature>
<feature type="binding site" evidence="1">
    <location>
        <position position="389"/>
    </location>
    <ligand>
        <name>Ca(2+)</name>
        <dbReference type="ChEBI" id="CHEBI:29108"/>
        <label>1</label>
    </ligand>
</feature>
<feature type="binding site" evidence="1">
    <location>
        <position position="392"/>
    </location>
    <ligand>
        <name>Ca(2+)</name>
        <dbReference type="ChEBI" id="CHEBI:29108"/>
        <label>1</label>
    </ligand>
</feature>
<feature type="binding site" evidence="1">
    <location>
        <position position="404"/>
    </location>
    <ligand>
        <name>Ca(2+)</name>
        <dbReference type="ChEBI" id="CHEBI:29108"/>
        <label>2</label>
    </ligand>
</feature>
<feature type="binding site" evidence="1">
    <location>
        <position position="407"/>
    </location>
    <ligand>
        <name>Ca(2+)</name>
        <dbReference type="ChEBI" id="CHEBI:29108"/>
        <label>2</label>
    </ligand>
</feature>
<feature type="binding site" evidence="1">
    <location>
        <position position="409"/>
    </location>
    <ligand>
        <name>Ca(2+)</name>
        <dbReference type="ChEBI" id="CHEBI:29108"/>
        <label>2</label>
    </ligand>
</feature>
<feature type="binding site" evidence="1">
    <location>
        <position position="411"/>
    </location>
    <ligand>
        <name>Ca(2+)</name>
        <dbReference type="ChEBI" id="CHEBI:29108"/>
        <label>2</label>
    </ligand>
</feature>
<feature type="binding site" evidence="1">
    <location>
        <position position="414"/>
    </location>
    <ligand>
        <name>Ca(2+)</name>
        <dbReference type="ChEBI" id="CHEBI:29108"/>
        <label>2</label>
    </ligand>
</feature>
<feature type="binding site" evidence="1">
    <location>
        <position position="417"/>
    </location>
    <ligand>
        <name>Ca(2+)</name>
        <dbReference type="ChEBI" id="CHEBI:29108"/>
        <label>2</label>
    </ligand>
</feature>
<feature type="binding site" evidence="1">
    <location>
        <position position="468"/>
    </location>
    <ligand>
        <name>Ca(2+)</name>
        <dbReference type="ChEBI" id="CHEBI:29108"/>
        <label>3</label>
    </ligand>
</feature>
<feature type="binding site" evidence="1">
    <location>
        <position position="469"/>
    </location>
    <ligand>
        <name>Ca(2+)</name>
        <dbReference type="ChEBI" id="CHEBI:29108"/>
        <label>3</label>
    </ligand>
</feature>
<feature type="binding site" evidence="1">
    <location>
        <position position="471"/>
    </location>
    <ligand>
        <name>Ca(2+)</name>
        <dbReference type="ChEBI" id="CHEBI:29108"/>
        <label>3</label>
    </ligand>
</feature>
<feature type="binding site" evidence="1">
    <location>
        <position position="483"/>
    </location>
    <ligand>
        <name>Ca(2+)</name>
        <dbReference type="ChEBI" id="CHEBI:29108"/>
        <label>3</label>
    </ligand>
</feature>
<feature type="binding site" evidence="1">
    <location>
        <position position="484"/>
    </location>
    <ligand>
        <name>Ca(2+)</name>
        <dbReference type="ChEBI" id="CHEBI:29108"/>
        <label>3</label>
    </ligand>
</feature>
<feature type="glycosylation site" description="N-linked (GlcNAc...) asparagine" evidence="2">
    <location>
        <position position="372"/>
    </location>
</feature>
<feature type="disulfide bond" evidence="1">
    <location>
        <begin position="309"/>
        <end position="389"/>
    </location>
</feature>
<feature type="disulfide bond" evidence="1">
    <location>
        <begin position="349"/>
        <end position="373"/>
    </location>
</feature>
<feature type="disulfide bond" evidence="1">
    <location>
        <begin position="351"/>
        <end position="356"/>
    </location>
</feature>
<feature type="disulfide bond" evidence="1">
    <location>
        <begin position="405"/>
        <end position="434"/>
    </location>
</feature>
<feature type="disulfide bond" evidence="1">
    <location>
        <begin position="416"/>
        <end position="429"/>
    </location>
</feature>
<feature type="disulfide bond" evidence="1">
    <location>
        <begin position="418"/>
        <end position="424"/>
    </location>
</feature>
<feature type="disulfide bond" evidence="1">
    <location>
        <begin position="428"/>
        <end position="451"/>
    </location>
</feature>
<feature type="disulfide bond" evidence="1">
    <location>
        <begin position="442"/>
        <end position="448"/>
    </location>
</feature>
<feature type="disulfide bond" evidence="1">
    <location>
        <begin position="447"/>
        <end position="473"/>
    </location>
</feature>
<feature type="disulfide bond" evidence="1">
    <location>
        <begin position="460"/>
        <end position="480"/>
    </location>
</feature>
<feature type="disulfide bond" evidence="1">
    <location>
        <begin position="467"/>
        <end position="499"/>
    </location>
</feature>
<feature type="disulfide bond" evidence="1">
    <location>
        <begin position="492"/>
        <end position="504"/>
    </location>
</feature>
<feature type="disulfide bond" evidence="1">
    <location>
        <begin position="511"/>
        <end position="561"/>
    </location>
</feature>
<feature type="disulfide bond" evidence="1">
    <location>
        <begin position="526"/>
        <end position="572"/>
    </location>
</feature>
<feature type="disulfide bond" evidence="1">
    <location>
        <begin position="539"/>
        <end position="549"/>
    </location>
</feature>
<feature type="disulfide bond" evidence="1">
    <location>
        <begin position="556"/>
        <end position="598"/>
    </location>
</feature>
<feature type="disulfide bond" evidence="1">
    <location>
        <begin position="592"/>
        <end position="603"/>
    </location>
</feature>
<comment type="function">
    <text evidence="1">Snake venom metalloproteinase that impairs hemostasis in the envenomed animal.</text>
</comment>
<comment type="cofactor">
    <cofactor evidence="1">
        <name>Zn(2+)</name>
        <dbReference type="ChEBI" id="CHEBI:29105"/>
    </cofactor>
    <text evidence="1">Binds 1 zinc ion per subunit.</text>
</comment>
<comment type="subunit">
    <text evidence="1">Monomer.</text>
</comment>
<comment type="subcellular location">
    <subcellularLocation>
        <location evidence="1">Secreted</location>
    </subcellularLocation>
</comment>
<comment type="tissue specificity">
    <text>Expressed by the venom gland.</text>
</comment>
<comment type="similarity">
    <text evidence="6">Belongs to the venom metalloproteinase (M12B) family. P-III subfamily. P-IIIa sub-subfamily.</text>
</comment>
<proteinExistence type="evidence at transcript level"/>
<evidence type="ECO:0000250" key="1"/>
<evidence type="ECO:0000255" key="2"/>
<evidence type="ECO:0000255" key="3">
    <source>
        <dbReference type="PROSITE-ProRule" id="PRU00068"/>
    </source>
</evidence>
<evidence type="ECO:0000255" key="4">
    <source>
        <dbReference type="PROSITE-ProRule" id="PRU00276"/>
    </source>
</evidence>
<evidence type="ECO:0000255" key="5">
    <source>
        <dbReference type="PROSITE-ProRule" id="PRU10095"/>
    </source>
</evidence>
<evidence type="ECO:0000305" key="6"/>
<protein>
    <recommendedName>
        <fullName>Zinc metalloproteinase-disintegrin-like BITM06A</fullName>
        <ecNumber>3.4.24.-</ecNumber>
    </recommendedName>
    <alternativeName>
        <fullName>Snake venom metalloproteinase</fullName>
        <shortName>SVMP</shortName>
    </alternativeName>
</protein>
<sequence length="610" mass="68284">MIQVLLVTICLAAFPYQGSSIILESGNVNDYEVVYPRKVTALPKGAVQPKYEDAMQYEFKVNGEPVVLHLEKNKGLFSKDYSETHYSPDGREITTYPAVEDHCYYHGRIENDADSTASISACNGLKGHFKLQRETYFIEPLKLSNSEAHAVFKYENVEKEDEAPKMCGVTQNWKSYEPIKKASQLVVTAEQQKYNPFRYVELFIVVDQEMVTKNNGDLDKIKARMYELANIVNEILRYLYMHAALVGLEIWSNGDKITVKPDVDYTLNSFAEWRKTDLLTRKKHDNAQLLTAIDFNGPTIGYAYIGSMCHPKRSVAIVEDYSPINLVVAVIMAHEMGHNLGIHHDTDFCSCGDYPCIMGPTISNEPSKFFSNCSYIQCWDFIMKENPQCILNEPLGTDIVSPPVCGNELLEVGEECDCGTPENCQNECCDAATCKLKSGSQCGHGDCCEQCKFSKSGTECRASMSECDPAEHCTGQSSECPADVFHKNGQPCLDNYGYCYNGNCPIMYHQCYALFGADVYEAEDSCFKDNQKGNYYGYCRKENGKKIPCAPEDVKCGRLYCKDNSPGQNNPCKMFYSNDDEHKGMVLPGTKCADGKVCSNGHCVDVATAY</sequence>
<dbReference type="EC" id="3.4.24.-"/>
<dbReference type="EMBL" id="AF490534">
    <property type="protein sequence ID" value="AAM09693.1"/>
    <property type="molecule type" value="mRNA"/>
</dbReference>
<dbReference type="SMR" id="Q8QG88"/>
<dbReference type="MEROPS" id="M12.140"/>
<dbReference type="GO" id="GO:0005576">
    <property type="term" value="C:extracellular region"/>
    <property type="evidence" value="ECO:0007669"/>
    <property type="project" value="UniProtKB-SubCell"/>
</dbReference>
<dbReference type="GO" id="GO:0005886">
    <property type="term" value="C:plasma membrane"/>
    <property type="evidence" value="ECO:0007669"/>
    <property type="project" value="TreeGrafter"/>
</dbReference>
<dbReference type="GO" id="GO:0046872">
    <property type="term" value="F:metal ion binding"/>
    <property type="evidence" value="ECO:0007669"/>
    <property type="project" value="UniProtKB-KW"/>
</dbReference>
<dbReference type="GO" id="GO:0004222">
    <property type="term" value="F:metalloendopeptidase activity"/>
    <property type="evidence" value="ECO:0007669"/>
    <property type="project" value="InterPro"/>
</dbReference>
<dbReference type="GO" id="GO:0090729">
    <property type="term" value="F:toxin activity"/>
    <property type="evidence" value="ECO:0007669"/>
    <property type="project" value="UniProtKB-KW"/>
</dbReference>
<dbReference type="GO" id="GO:0006508">
    <property type="term" value="P:proteolysis"/>
    <property type="evidence" value="ECO:0007669"/>
    <property type="project" value="UniProtKB-KW"/>
</dbReference>
<dbReference type="CDD" id="cd04269">
    <property type="entry name" value="ZnMc_adamalysin_II_like"/>
    <property type="match status" value="1"/>
</dbReference>
<dbReference type="FunFam" id="3.40.390.10:FF:000002">
    <property type="entry name" value="Disintegrin and metalloproteinase domain-containing protein 22"/>
    <property type="match status" value="1"/>
</dbReference>
<dbReference type="FunFam" id="4.10.70.10:FF:000001">
    <property type="entry name" value="Disintegrin and metalloproteinase domain-containing protein 22"/>
    <property type="match status" value="1"/>
</dbReference>
<dbReference type="Gene3D" id="3.40.390.10">
    <property type="entry name" value="Collagenase (Catalytic Domain)"/>
    <property type="match status" value="1"/>
</dbReference>
<dbReference type="Gene3D" id="4.10.70.10">
    <property type="entry name" value="Disintegrin domain"/>
    <property type="match status" value="1"/>
</dbReference>
<dbReference type="InterPro" id="IPR006586">
    <property type="entry name" value="ADAM_Cys-rich"/>
</dbReference>
<dbReference type="InterPro" id="IPR018358">
    <property type="entry name" value="Disintegrin_CS"/>
</dbReference>
<dbReference type="InterPro" id="IPR001762">
    <property type="entry name" value="Disintegrin_dom"/>
</dbReference>
<dbReference type="InterPro" id="IPR036436">
    <property type="entry name" value="Disintegrin_dom_sf"/>
</dbReference>
<dbReference type="InterPro" id="IPR024079">
    <property type="entry name" value="MetalloPept_cat_dom_sf"/>
</dbReference>
<dbReference type="InterPro" id="IPR001590">
    <property type="entry name" value="Peptidase_M12B"/>
</dbReference>
<dbReference type="InterPro" id="IPR002870">
    <property type="entry name" value="Peptidase_M12B_N"/>
</dbReference>
<dbReference type="InterPro" id="IPR034027">
    <property type="entry name" value="Reprolysin_adamalysin"/>
</dbReference>
<dbReference type="PANTHER" id="PTHR11905">
    <property type="entry name" value="ADAM A DISINTEGRIN AND METALLOPROTEASE DOMAIN"/>
    <property type="match status" value="1"/>
</dbReference>
<dbReference type="PANTHER" id="PTHR11905:SF32">
    <property type="entry name" value="DISINTEGRIN AND METALLOPROTEINASE DOMAIN-CONTAINING PROTEIN 28"/>
    <property type="match status" value="1"/>
</dbReference>
<dbReference type="Pfam" id="PF08516">
    <property type="entry name" value="ADAM_CR"/>
    <property type="match status" value="1"/>
</dbReference>
<dbReference type="Pfam" id="PF00200">
    <property type="entry name" value="Disintegrin"/>
    <property type="match status" value="1"/>
</dbReference>
<dbReference type="Pfam" id="PF01562">
    <property type="entry name" value="Pep_M12B_propep"/>
    <property type="match status" value="1"/>
</dbReference>
<dbReference type="Pfam" id="PF01421">
    <property type="entry name" value="Reprolysin"/>
    <property type="match status" value="1"/>
</dbReference>
<dbReference type="PRINTS" id="PR00289">
    <property type="entry name" value="DISINTEGRIN"/>
</dbReference>
<dbReference type="SMART" id="SM00608">
    <property type="entry name" value="ACR"/>
    <property type="match status" value="1"/>
</dbReference>
<dbReference type="SMART" id="SM00050">
    <property type="entry name" value="DISIN"/>
    <property type="match status" value="1"/>
</dbReference>
<dbReference type="SUPFAM" id="SSF57552">
    <property type="entry name" value="Blood coagulation inhibitor (disintegrin)"/>
    <property type="match status" value="1"/>
</dbReference>
<dbReference type="SUPFAM" id="SSF55486">
    <property type="entry name" value="Metalloproteases ('zincins'), catalytic domain"/>
    <property type="match status" value="1"/>
</dbReference>
<dbReference type="PROSITE" id="PS50215">
    <property type="entry name" value="ADAM_MEPRO"/>
    <property type="match status" value="1"/>
</dbReference>
<dbReference type="PROSITE" id="PS00427">
    <property type="entry name" value="DISINTEGRIN_1"/>
    <property type="match status" value="1"/>
</dbReference>
<dbReference type="PROSITE" id="PS50214">
    <property type="entry name" value="DISINTEGRIN_2"/>
    <property type="match status" value="1"/>
</dbReference>
<dbReference type="PROSITE" id="PS00142">
    <property type="entry name" value="ZINC_PROTEASE"/>
    <property type="match status" value="1"/>
</dbReference>